<feature type="chain" id="PRO_1000003301" description="Ribosome-recycling factor">
    <location>
        <begin position="1"/>
        <end position="185"/>
    </location>
</feature>
<feature type="region of interest" description="Disordered" evidence="2">
    <location>
        <begin position="143"/>
        <end position="163"/>
    </location>
</feature>
<keyword id="KW-0963">Cytoplasm</keyword>
<keyword id="KW-0648">Protein biosynthesis</keyword>
<keyword id="KW-1185">Reference proteome</keyword>
<protein>
    <recommendedName>
        <fullName evidence="1">Ribosome-recycling factor</fullName>
        <shortName evidence="1">RRF</shortName>
    </recommendedName>
    <alternativeName>
        <fullName evidence="1">Ribosome-releasing factor</fullName>
    </alternativeName>
</protein>
<proteinExistence type="inferred from homology"/>
<evidence type="ECO:0000255" key="1">
    <source>
        <dbReference type="HAMAP-Rule" id="MF_00040"/>
    </source>
</evidence>
<evidence type="ECO:0000256" key="2">
    <source>
        <dbReference type="SAM" id="MobiDB-lite"/>
    </source>
</evidence>
<gene>
    <name evidence="1" type="primary">frr</name>
    <name type="ordered locus">Swol_0885</name>
</gene>
<organism>
    <name type="scientific">Syntrophomonas wolfei subsp. wolfei (strain DSM 2245B / Goettingen)</name>
    <dbReference type="NCBI Taxonomy" id="335541"/>
    <lineage>
        <taxon>Bacteria</taxon>
        <taxon>Bacillati</taxon>
        <taxon>Bacillota</taxon>
        <taxon>Clostridia</taxon>
        <taxon>Eubacteriales</taxon>
        <taxon>Syntrophomonadaceae</taxon>
        <taxon>Syntrophomonas</taxon>
    </lineage>
</organism>
<reference key="1">
    <citation type="journal article" date="2010" name="Environ. Microbiol.">
        <title>The genome of Syntrophomonas wolfei: new insights into syntrophic metabolism and biohydrogen production.</title>
        <authorList>
            <person name="Sieber J.R."/>
            <person name="Sims D.R."/>
            <person name="Han C."/>
            <person name="Kim E."/>
            <person name="Lykidis A."/>
            <person name="Lapidus A.L."/>
            <person name="McDonnald E."/>
            <person name="Rohlin L."/>
            <person name="Culley D.E."/>
            <person name="Gunsalus R."/>
            <person name="McInerney M.J."/>
        </authorList>
    </citation>
    <scope>NUCLEOTIDE SEQUENCE [LARGE SCALE GENOMIC DNA]</scope>
    <source>
        <strain>DSM 2245B / Goettingen</strain>
    </source>
</reference>
<comment type="function">
    <text evidence="1">Responsible for the release of ribosomes from messenger RNA at the termination of protein biosynthesis. May increase the efficiency of translation by recycling ribosomes from one round of translation to another.</text>
</comment>
<comment type="subcellular location">
    <subcellularLocation>
        <location evidence="1">Cytoplasm</location>
    </subcellularLocation>
</comment>
<comment type="similarity">
    <text evidence="1">Belongs to the RRF family.</text>
</comment>
<sequence length="185" mass="21263">MIKDILSDTEERMKKTIEHLRKDLASLRAGRANPAMLEKIMVDYYGQPTPINQLANITVPEARLLVIQPWDKTIIASIEKAIMKSDLGINPSNDGNVIRLVIPQLTEERRKELVKVLRKRAEEARVAVRNIRRDSNELLKSGEKEKLISEDDNKKGMDDIQKETDRHIKEIDSILQGKEKEIMEV</sequence>
<name>RRF_SYNWW</name>
<dbReference type="EMBL" id="CP000448">
    <property type="protein sequence ID" value="ABI68203.1"/>
    <property type="molecule type" value="Genomic_DNA"/>
</dbReference>
<dbReference type="RefSeq" id="WP_011640308.1">
    <property type="nucleotide sequence ID" value="NC_008346.1"/>
</dbReference>
<dbReference type="SMR" id="Q0AYK1"/>
<dbReference type="STRING" id="335541.Swol_0885"/>
<dbReference type="KEGG" id="swo:Swol_0885"/>
<dbReference type="eggNOG" id="COG0233">
    <property type="taxonomic scope" value="Bacteria"/>
</dbReference>
<dbReference type="HOGENOM" id="CLU_073981_2_0_9"/>
<dbReference type="OrthoDB" id="9804006at2"/>
<dbReference type="Proteomes" id="UP000001968">
    <property type="component" value="Chromosome"/>
</dbReference>
<dbReference type="GO" id="GO:0005737">
    <property type="term" value="C:cytoplasm"/>
    <property type="evidence" value="ECO:0007669"/>
    <property type="project" value="UniProtKB-SubCell"/>
</dbReference>
<dbReference type="GO" id="GO:0043023">
    <property type="term" value="F:ribosomal large subunit binding"/>
    <property type="evidence" value="ECO:0007669"/>
    <property type="project" value="TreeGrafter"/>
</dbReference>
<dbReference type="GO" id="GO:0006415">
    <property type="term" value="P:translational termination"/>
    <property type="evidence" value="ECO:0007669"/>
    <property type="project" value="UniProtKB-UniRule"/>
</dbReference>
<dbReference type="CDD" id="cd00520">
    <property type="entry name" value="RRF"/>
    <property type="match status" value="1"/>
</dbReference>
<dbReference type="FunFam" id="1.10.132.20:FF:000001">
    <property type="entry name" value="Ribosome-recycling factor"/>
    <property type="match status" value="1"/>
</dbReference>
<dbReference type="FunFam" id="3.30.1360.40:FF:000001">
    <property type="entry name" value="Ribosome-recycling factor"/>
    <property type="match status" value="1"/>
</dbReference>
<dbReference type="Gene3D" id="3.30.1360.40">
    <property type="match status" value="1"/>
</dbReference>
<dbReference type="Gene3D" id="1.10.132.20">
    <property type="entry name" value="Ribosome-recycling factor"/>
    <property type="match status" value="1"/>
</dbReference>
<dbReference type="HAMAP" id="MF_00040">
    <property type="entry name" value="RRF"/>
    <property type="match status" value="1"/>
</dbReference>
<dbReference type="InterPro" id="IPR002661">
    <property type="entry name" value="Ribosome_recyc_fac"/>
</dbReference>
<dbReference type="InterPro" id="IPR023584">
    <property type="entry name" value="Ribosome_recyc_fac_dom"/>
</dbReference>
<dbReference type="InterPro" id="IPR036191">
    <property type="entry name" value="RRF_sf"/>
</dbReference>
<dbReference type="NCBIfam" id="TIGR00496">
    <property type="entry name" value="frr"/>
    <property type="match status" value="1"/>
</dbReference>
<dbReference type="PANTHER" id="PTHR20982:SF3">
    <property type="entry name" value="MITOCHONDRIAL RIBOSOME RECYCLING FACTOR PSEUDO 1"/>
    <property type="match status" value="1"/>
</dbReference>
<dbReference type="PANTHER" id="PTHR20982">
    <property type="entry name" value="RIBOSOME RECYCLING FACTOR"/>
    <property type="match status" value="1"/>
</dbReference>
<dbReference type="Pfam" id="PF01765">
    <property type="entry name" value="RRF"/>
    <property type="match status" value="1"/>
</dbReference>
<dbReference type="SUPFAM" id="SSF55194">
    <property type="entry name" value="Ribosome recycling factor, RRF"/>
    <property type="match status" value="1"/>
</dbReference>
<accession>Q0AYK1</accession>